<accession>Q5HDJ3</accession>
<keyword id="KW-0067">ATP-binding</keyword>
<keyword id="KW-1003">Cell membrane</keyword>
<keyword id="KW-0418">Kinase</keyword>
<keyword id="KW-0472">Membrane</keyword>
<keyword id="KW-0547">Nucleotide-binding</keyword>
<keyword id="KW-0597">Phosphoprotein</keyword>
<keyword id="KW-0808">Transferase</keyword>
<keyword id="KW-0812">Transmembrane</keyword>
<keyword id="KW-1133">Transmembrane helix</keyword>
<keyword id="KW-0902">Two-component regulatory system</keyword>
<keyword id="KW-0843">Virulence</keyword>
<protein>
    <recommendedName>
        <fullName>Heme sensor protein HssS</fullName>
        <ecNumber>2.7.13.3</ecNumber>
    </recommendedName>
</protein>
<reference key="1">
    <citation type="journal article" date="2005" name="J. Bacteriol.">
        <title>Insights on evolution of virulence and resistance from the complete genome analysis of an early methicillin-resistant Staphylococcus aureus strain and a biofilm-producing methicillin-resistant Staphylococcus epidermidis strain.</title>
        <authorList>
            <person name="Gill S.R."/>
            <person name="Fouts D.E."/>
            <person name="Archer G.L."/>
            <person name="Mongodin E.F."/>
            <person name="DeBoy R.T."/>
            <person name="Ravel J."/>
            <person name="Paulsen I.T."/>
            <person name="Kolonay J.F."/>
            <person name="Brinkac L.M."/>
            <person name="Beanan M.J."/>
            <person name="Dodson R.J."/>
            <person name="Daugherty S.C."/>
            <person name="Madupu R."/>
            <person name="Angiuoli S.V."/>
            <person name="Durkin A.S."/>
            <person name="Haft D.H."/>
            <person name="Vamathevan J.J."/>
            <person name="Khouri H."/>
            <person name="Utterback T.R."/>
            <person name="Lee C."/>
            <person name="Dimitrov G."/>
            <person name="Jiang L."/>
            <person name="Qin H."/>
            <person name="Weidman J."/>
            <person name="Tran K."/>
            <person name="Kang K.H."/>
            <person name="Hance I.R."/>
            <person name="Nelson K.E."/>
            <person name="Fraser C.M."/>
        </authorList>
    </citation>
    <scope>NUCLEOTIDE SEQUENCE [LARGE SCALE GENOMIC DNA]</scope>
    <source>
        <strain>COL</strain>
    </source>
</reference>
<comment type="function">
    <text evidence="1">Member of the two-component regulatory system HssS/HssR involved in intracellular heme homeostasis and tempering of staphylococcal virulence. HssS functions as a heme sensor histidine kinase which is autophosphorylated at a histidine residue and transfers its phosphate group to an aspartate residue of HssR. HssR/HssS activates the expression of hrtAB, an efflux pump, in response to extracellular heme, hemin, hemoglobin or blood (By similarity).</text>
</comment>
<comment type="catalytic activity">
    <reaction>
        <text>ATP + protein L-histidine = ADP + protein N-phospho-L-histidine.</text>
        <dbReference type="EC" id="2.7.13.3"/>
    </reaction>
</comment>
<comment type="subcellular location">
    <subcellularLocation>
        <location evidence="1">Cell membrane</location>
        <topology evidence="1">Multi-pass membrane protein</topology>
    </subcellularLocation>
</comment>
<comment type="PTM">
    <text evidence="1">Autophosphorylated.</text>
</comment>
<dbReference type="EC" id="2.7.13.3"/>
<dbReference type="EMBL" id="CP000046">
    <property type="protein sequence ID" value="AAW37186.1"/>
    <property type="molecule type" value="Genomic_DNA"/>
</dbReference>
<dbReference type="RefSeq" id="WP_000477329.1">
    <property type="nucleotide sequence ID" value="NZ_JBGOFO010000004.1"/>
</dbReference>
<dbReference type="SMR" id="Q5HDJ3"/>
<dbReference type="KEGG" id="sac:SACOL2359"/>
<dbReference type="HOGENOM" id="CLU_000445_89_6_9"/>
<dbReference type="Proteomes" id="UP000000530">
    <property type="component" value="Chromosome"/>
</dbReference>
<dbReference type="GO" id="GO:0005886">
    <property type="term" value="C:plasma membrane"/>
    <property type="evidence" value="ECO:0007669"/>
    <property type="project" value="UniProtKB-SubCell"/>
</dbReference>
<dbReference type="GO" id="GO:0005524">
    <property type="term" value="F:ATP binding"/>
    <property type="evidence" value="ECO:0007669"/>
    <property type="project" value="UniProtKB-KW"/>
</dbReference>
<dbReference type="GO" id="GO:0000155">
    <property type="term" value="F:phosphorelay sensor kinase activity"/>
    <property type="evidence" value="ECO:0007669"/>
    <property type="project" value="InterPro"/>
</dbReference>
<dbReference type="CDD" id="cd06225">
    <property type="entry name" value="HAMP"/>
    <property type="match status" value="1"/>
</dbReference>
<dbReference type="CDD" id="cd00082">
    <property type="entry name" value="HisKA"/>
    <property type="match status" value="1"/>
</dbReference>
<dbReference type="FunFam" id="3.30.565.10:FF:000006">
    <property type="entry name" value="Sensor histidine kinase WalK"/>
    <property type="match status" value="1"/>
</dbReference>
<dbReference type="Gene3D" id="1.10.287.130">
    <property type="match status" value="1"/>
</dbReference>
<dbReference type="Gene3D" id="6.10.340.10">
    <property type="match status" value="1"/>
</dbReference>
<dbReference type="Gene3D" id="3.30.565.10">
    <property type="entry name" value="Histidine kinase-like ATPase, C-terminal domain"/>
    <property type="match status" value="1"/>
</dbReference>
<dbReference type="InterPro" id="IPR050398">
    <property type="entry name" value="Bact_Sensor_His_Kinase"/>
</dbReference>
<dbReference type="InterPro" id="IPR003660">
    <property type="entry name" value="HAMP_dom"/>
</dbReference>
<dbReference type="InterPro" id="IPR036890">
    <property type="entry name" value="HATPase_C_sf"/>
</dbReference>
<dbReference type="InterPro" id="IPR005467">
    <property type="entry name" value="His_kinase_dom"/>
</dbReference>
<dbReference type="InterPro" id="IPR003661">
    <property type="entry name" value="HisK_dim/P_dom"/>
</dbReference>
<dbReference type="InterPro" id="IPR036097">
    <property type="entry name" value="HisK_dim/P_sf"/>
</dbReference>
<dbReference type="InterPro" id="IPR004358">
    <property type="entry name" value="Sig_transdc_His_kin-like_C"/>
</dbReference>
<dbReference type="PANTHER" id="PTHR45528:SF11">
    <property type="entry name" value="HISTIDINE KINASE"/>
    <property type="match status" value="1"/>
</dbReference>
<dbReference type="PANTHER" id="PTHR45528">
    <property type="entry name" value="SENSOR HISTIDINE KINASE CPXA"/>
    <property type="match status" value="1"/>
</dbReference>
<dbReference type="Pfam" id="PF00672">
    <property type="entry name" value="HAMP"/>
    <property type="match status" value="1"/>
</dbReference>
<dbReference type="Pfam" id="PF02518">
    <property type="entry name" value="HATPase_c"/>
    <property type="match status" value="1"/>
</dbReference>
<dbReference type="Pfam" id="PF00512">
    <property type="entry name" value="HisKA"/>
    <property type="match status" value="1"/>
</dbReference>
<dbReference type="PRINTS" id="PR00344">
    <property type="entry name" value="BCTRLSENSOR"/>
</dbReference>
<dbReference type="SMART" id="SM00304">
    <property type="entry name" value="HAMP"/>
    <property type="match status" value="1"/>
</dbReference>
<dbReference type="SMART" id="SM00387">
    <property type="entry name" value="HATPase_c"/>
    <property type="match status" value="1"/>
</dbReference>
<dbReference type="SMART" id="SM00388">
    <property type="entry name" value="HisKA"/>
    <property type="match status" value="1"/>
</dbReference>
<dbReference type="SUPFAM" id="SSF55874">
    <property type="entry name" value="ATPase domain of HSP90 chaperone/DNA topoisomerase II/histidine kinase"/>
    <property type="match status" value="1"/>
</dbReference>
<dbReference type="SUPFAM" id="SSF158472">
    <property type="entry name" value="HAMP domain-like"/>
    <property type="match status" value="1"/>
</dbReference>
<dbReference type="SUPFAM" id="SSF47384">
    <property type="entry name" value="Homodimeric domain of signal transducing histidine kinase"/>
    <property type="match status" value="1"/>
</dbReference>
<dbReference type="PROSITE" id="PS50885">
    <property type="entry name" value="HAMP"/>
    <property type="match status" value="1"/>
</dbReference>
<dbReference type="PROSITE" id="PS50109">
    <property type="entry name" value="HIS_KIN"/>
    <property type="match status" value="1"/>
</dbReference>
<name>HSSS_STAAC</name>
<organism>
    <name type="scientific">Staphylococcus aureus (strain COL)</name>
    <dbReference type="NCBI Taxonomy" id="93062"/>
    <lineage>
        <taxon>Bacteria</taxon>
        <taxon>Bacillati</taxon>
        <taxon>Bacillota</taxon>
        <taxon>Bacilli</taxon>
        <taxon>Bacillales</taxon>
        <taxon>Staphylococcaceae</taxon>
        <taxon>Staphylococcus</taxon>
    </lineage>
</organism>
<gene>
    <name type="primary">hssS</name>
    <name type="ordered locus">SACOL2359</name>
</gene>
<sequence length="457" mass="52375">MFKTLYARIAIYSITVILFSALISFVLTNVYYHYNLKASNDAKIMKTLKEARQYEQSAKPTHIQQYFKHLGQMNYQIMTIDQKGHKTFYGEPFREDTLSQNAINNVLNNQDYHGIKDKPFALFVTGFFDNVTDNTVGINFKTKDGSIAVFMRPDIGETFSEFRTFLAVLLMLLLFISISLVIASTYSIIRPVKKLKLATERLIDGDFETPIKQTRKDEIGTLQYHFNKMRESLGQVDQMRQHFVQNVSHEIKTPLTHIHHLLSELQQTSDKTLRQQYINDIYTITTQLSGLTTELLLLSELDNHQHLLFDDKIQVNQLIKDIIRHEQFAADEKSLIILADLESINFLGNQRLLHQALSNLLINAIKYTDVGGAIDIALQHSHNNIIFTISNDGSPISPQAEARLFERFYKVSKHDNSNGLGLAITKSIIELHHGTIQFTQSNEYVTTFTITLPNNSL</sequence>
<evidence type="ECO:0000250" key="1"/>
<evidence type="ECO:0000255" key="2"/>
<evidence type="ECO:0000255" key="3">
    <source>
        <dbReference type="PROSITE-ProRule" id="PRU00102"/>
    </source>
</evidence>
<evidence type="ECO:0000255" key="4">
    <source>
        <dbReference type="PROSITE-ProRule" id="PRU00107"/>
    </source>
</evidence>
<feature type="chain" id="PRO_0000331338" description="Heme sensor protein HssS">
    <location>
        <begin position="1"/>
        <end position="457"/>
    </location>
</feature>
<feature type="transmembrane region" description="Helical" evidence="2">
    <location>
        <begin position="9"/>
        <end position="29"/>
    </location>
</feature>
<feature type="transmembrane region" description="Helical" evidence="2">
    <location>
        <begin position="164"/>
        <end position="184"/>
    </location>
</feature>
<feature type="domain" description="HAMP" evidence="3">
    <location>
        <begin position="186"/>
        <end position="238"/>
    </location>
</feature>
<feature type="domain" description="Histidine kinase" evidence="4">
    <location>
        <begin position="246"/>
        <end position="456"/>
    </location>
</feature>
<feature type="modified residue" description="Phosphohistidine; by autocatalysis" evidence="4">
    <location>
        <position position="249"/>
    </location>
</feature>
<proteinExistence type="inferred from homology"/>